<accession>Q01534</accession>
<accession>A6NJD2</accession>
<accession>O00216</accession>
<accession>P09002</accession>
<accession>Q0VAD3</accession>
<accession>Q9UNN7</accession>
<protein>
    <recommendedName>
        <fullName>Testis-specific Y-encoded protein 1</fullName>
    </recommendedName>
    <alternativeName>
        <fullName>Cancer/testis antigen 78</fullName>
        <shortName>CT78</shortName>
    </alternativeName>
</protein>
<comment type="function">
    <text evidence="7">May be involved in sperm differentiation and proliferation.</text>
</comment>
<comment type="interaction">
    <interactant intactId="EBI-1973142">
        <id>Q01534</id>
    </interactant>
    <interactant intactId="EBI-773865">
        <id>P10126</id>
        <label>Eef1a1</label>
    </interactant>
    <organismsDiffer>true</organismsDiffer>
    <experiments>5</experiments>
</comment>
<comment type="subcellular location">
    <subcellularLocation>
        <location evidence="7">Cytoplasm</location>
    </subcellularLocation>
    <subcellularLocation>
        <location evidence="7">Nucleus</location>
    </subcellularLocation>
    <text>Predominantly cytoplasmic. Also found in nucleus.</text>
</comment>
<comment type="alternative products">
    <event type="alternative splicing"/>
    <isoform>
        <id>Q01534-1</id>
        <name>1</name>
        <name>Short</name>
        <name>TSPY-S</name>
        <sequence type="displayed"/>
    </isoform>
    <isoform>
        <id>Q01534-2</id>
        <name>2</name>
        <name>Long</name>
        <name>TSPY-L</name>
        <sequence type="described" ref="VSP_008012"/>
    </isoform>
    <text>Additional isoforms seem to exist.</text>
</comment>
<comment type="tissue specificity">
    <text evidence="2 7">Specifically expressed in testicular tissues. Isoform 1 and isoform 2 are expressed in spermatogonia and spermatocytes. Found in early testicular carcinoma in situ, spermatogonial cells in testicular tissues of 46,X,Y female and in prostate cancer cell lines.</text>
</comment>
<comment type="developmental stage">
    <text evidence="7">Detected in 22-week old testis.</text>
</comment>
<comment type="induction">
    <text evidence="2">Up-regulated by androgen in a prostate cancer cell line.</text>
</comment>
<comment type="PTM">
    <text evidence="7">Phosphorylated.</text>
</comment>
<comment type="polymorphism">
    <text>Variants Val-Glu-Val-Val-Ala-Glu-79 Ins and Arg-195 are shown to be present in a number of TSPY1 copies of the Yp11 loci. Variant Arg-195 is shown to be present at least in one TSPY1 copy of the Yq locus.</text>
</comment>
<comment type="polymorphism">
    <text>Maps to a tandemly repeated region on chromosome Yp11; additionally at least one copy is reported originating from Yq. The gene is thought to be present with an inter-individual variation in copy number and between 20 and 60 copies per Y chromosome are expected. PubMed:12815422 reports 35 tandemly repeated gene copies on Yp11 originating from one individual.</text>
</comment>
<comment type="disease">
    <text evidence="1 3 5">TSPY is located in the gonadoblastoma critical region and is preferentially expressed in tumor germ cells of gonadoblastoma specimens. Expression also correlates with testicular seminoma and tumorigenesis of the prostate gland.</text>
</comment>
<comment type="similarity">
    <text evidence="8">Belongs to the nucleosome assembly protein (NAP) family.</text>
</comment>
<comment type="sequence caution" evidence="8">
    <conflict type="erroneous initiation">
        <sequence resource="EMBL-CDS" id="AAA36570"/>
    </conflict>
    <text>Truncated N-terminus.</text>
</comment>
<comment type="sequence caution" evidence="8">
    <conflict type="miscellaneous discrepancy">
        <sequence resource="EMBL-CDS" id="AAA61238"/>
    </conflict>
    <text>Probable unspliced transcript.</text>
</comment>
<comment type="sequence caution" evidence="8">
    <conflict type="miscellaneous discrepancy">
        <sequence resource="EMBL-CDS" id="CAA29640"/>
    </conflict>
    <text>Sequence of unknown origin inserted in the coding sequence.</text>
</comment>
<comment type="sequence caution" evidence="8">
    <conflict type="frameshift">
        <sequence resource="EMBL" id="X74029"/>
    </conflict>
</comment>
<keyword id="KW-0025">Alternative splicing</keyword>
<keyword id="KW-0963">Cytoplasm</keyword>
<keyword id="KW-0217">Developmental protein</keyword>
<keyword id="KW-0221">Differentiation</keyword>
<keyword id="KW-0334">Gonadal differentiation</keyword>
<keyword id="KW-0539">Nucleus</keyword>
<keyword id="KW-0597">Phosphoprotein</keyword>
<keyword id="KW-1185">Reference proteome</keyword>
<keyword id="KW-0744">Spermatogenesis</keyword>
<evidence type="ECO:0000269" key="1">
    <source>
    </source>
</evidence>
<evidence type="ECO:0000269" key="2">
    <source>
    </source>
</evidence>
<evidence type="ECO:0000269" key="3">
    <source>
    </source>
</evidence>
<evidence type="ECO:0000269" key="4">
    <source>
    </source>
</evidence>
<evidence type="ECO:0000269" key="5">
    <source>
    </source>
</evidence>
<evidence type="ECO:0000269" key="6">
    <source>
    </source>
</evidence>
<evidence type="ECO:0000269" key="7">
    <source>
    </source>
</evidence>
<evidence type="ECO:0000305" key="8"/>
<feature type="chain" id="PRO_0000185668" description="Testis-specific Y-encoded protein 1">
    <location>
        <begin position="1"/>
        <end position="308"/>
    </location>
</feature>
<feature type="splice variant" id="VSP_008012" description="In isoform 2." evidence="8">
    <original>ILCKDLWRNPLQYYKRMKPPEEGTETSGDSQLLS</original>
    <variation>SPDRSYVRTCGAIPCNTTRG</variation>
    <location>
        <begin position="275"/>
        <end position="308"/>
    </location>
</feature>
<feature type="sequence variant" id="VAR_016226">
    <original>E</original>
    <variation>EVEVVAE</variation>
    <location>
        <position position="79"/>
    </location>
</feature>
<feature type="sequence variant" id="VAR_016227" evidence="3 4">
    <original>P</original>
    <variation>R</variation>
    <location>
        <position position="195"/>
    </location>
</feature>
<feature type="sequence variant" id="VAR_016228" evidence="6">
    <original>I</original>
    <variation>F</variation>
    <location>
        <position position="216"/>
    </location>
</feature>
<feature type="sequence conflict" description="In Ref. 5; X74029." evidence="8" ref="5">
    <original>RP</original>
    <variation>PA</variation>
    <location>
        <begin position="2"/>
        <end position="3"/>
    </location>
</feature>
<feature type="sequence conflict" description="In Ref. 1; AAB51693, 2; AAD47421 and 7; AAA36570." evidence="8" ref="1 2 7">
    <original>RA</original>
    <variation>PR</variation>
    <location>
        <begin position="92"/>
        <end position="93"/>
    </location>
</feature>
<feature type="sequence conflict" description="In Ref. 1; AAB51693, 2; AAD47421, 4; AAI21115 and 7; AAA36570." evidence="8" ref="1 2 4 7">
    <original>P</original>
    <variation>L</variation>
    <location>
        <position position="109"/>
    </location>
</feature>
<feature type="sequence conflict" description="In Ref. 1; AAB51693, 2; AAD47421, 4; AAI21115 and 7; AAA36570." evidence="8" ref="1 2 4 7">
    <original>G</original>
    <variation>E</variation>
    <location>
        <position position="190"/>
    </location>
</feature>
<name>TSPY1_HUMAN</name>
<sequence length="308" mass="35012">MRPEGSLTYRVPERLRQGFCGVGRAAQALVCASAKEGTAFRMEAVQEGAAGVESEQAALGEEAVLLLDDIMAEVEVVAEEEGLVERREEAQRAQQAVPGPGPMTPESAPEELLAVQVELEPVNAQARKAFSRQREKMERRRKPHLDRRGAVIQSVPGFWANVIANHPQMSALITDEDEDMLSYMVSLEVGEEKHPVHLCKIMLFFRSNPYFQNKVITKEYLVNITEYRASHSTPIEWYPDYEVEAYRRRHHNSSLNFFNWFSDHNFAGSNKIAEILCKDLWRNPLQYYKRMKPPEEGTETSGDSQLLS</sequence>
<reference key="1">
    <citation type="journal article" date="1996" name="Hum. Mol. Genet.">
        <title>Testis-specific protein, Y-encoded (TSPY) expression in testicular tissues.</title>
        <authorList>
            <person name="Schnieders F."/>
            <person name="Doerk T."/>
            <person name="Arnemann J."/>
            <person name="Vogel T."/>
            <person name="Werner P."/>
            <person name="Schmidtke J."/>
        </authorList>
    </citation>
    <scope>NUCLEOTIDE SEQUENCE [MRNA] (ISOFORM 1)</scope>
    <scope>FUNCTION</scope>
    <scope>ALTERNATIVE SPLICING</scope>
    <scope>TISSUE SPECIFICITY</scope>
    <scope>SUBCELLULAR LOCATION</scope>
    <scope>DEVELOPMENTAL STAGE</scope>
    <scope>PHOSPHORYLATION</scope>
    <source>
        <tissue>Testis</tissue>
    </source>
</reference>
<reference key="2">
    <citation type="journal article" date="2000" name="Cytogenet. Cell Genet.">
        <title>Characterization of a new TSPY gene family member in Yq (TSPYq1).</title>
        <authorList>
            <person name="Ratti A."/>
            <person name="Stuppia L."/>
            <person name="Gatta V."/>
            <person name="Fogh I."/>
            <person name="Calabrese G."/>
            <person name="Pizzuti A."/>
            <person name="Palka G."/>
        </authorList>
    </citation>
    <scope>NUCLEOTIDE SEQUENCE [GENOMIC DNA] (ISOFORM 1)</scope>
    <scope>DISEASE</scope>
    <scope>VARIANT ARG-195</scope>
</reference>
<reference key="3">
    <citation type="journal article" date="2003" name="Nature">
        <title>The male-specific region of the human Y chromosome is a mosaic of discrete sequence classes.</title>
        <authorList>
            <person name="Skaletsky H."/>
            <person name="Kuroda-Kawaguchi T."/>
            <person name="Minx P.J."/>
            <person name="Cordum H.S."/>
            <person name="Hillier L.W."/>
            <person name="Brown L.G."/>
            <person name="Repping S."/>
            <person name="Pyntikova T."/>
            <person name="Ali J."/>
            <person name="Bieri T."/>
            <person name="Chinwalla A."/>
            <person name="Delehaunty A."/>
            <person name="Delehaunty K."/>
            <person name="Du H."/>
            <person name="Fewell G."/>
            <person name="Fulton L."/>
            <person name="Fulton R."/>
            <person name="Graves T.A."/>
            <person name="Hou S.-F."/>
            <person name="Latrielle P."/>
            <person name="Leonard S."/>
            <person name="Mardis E."/>
            <person name="Maupin R."/>
            <person name="McPherson J."/>
            <person name="Miner T."/>
            <person name="Nash W."/>
            <person name="Nguyen C."/>
            <person name="Ozersky P."/>
            <person name="Pepin K."/>
            <person name="Rock S."/>
            <person name="Rohlfing T."/>
            <person name="Scott K."/>
            <person name="Schultz B."/>
            <person name="Strong C."/>
            <person name="Tin-Wollam A."/>
            <person name="Yang S.-P."/>
            <person name="Waterston R.H."/>
            <person name="Wilson R.K."/>
            <person name="Rozen S."/>
            <person name="Page D.C."/>
        </authorList>
    </citation>
    <scope>NUCLEOTIDE SEQUENCE [LARGE SCALE GENOMIC DNA]</scope>
</reference>
<reference key="4">
    <citation type="journal article" date="2004" name="Genome Res.">
        <title>The status, quality, and expansion of the NIH full-length cDNA project: the Mammalian Gene Collection (MGC).</title>
        <authorList>
            <consortium name="The MGC Project Team"/>
        </authorList>
    </citation>
    <scope>NUCLEOTIDE SEQUENCE [LARGE SCALE MRNA] (ISOFORM 1)</scope>
</reference>
<reference key="5">
    <citation type="journal article" date="1993" name="Genomics">
        <title>TSPY-related sequences represent a microheterogeneous gene family organized as constitutive elements in DYZ5 tandem repeat units on the human Y chromosome.</title>
        <authorList>
            <person name="Manz E."/>
            <person name="Schnieders F."/>
            <person name="Mueller Brechlin A."/>
            <person name="Schmidtke J."/>
        </authorList>
    </citation>
    <scope>NUCLEOTIDE SEQUENCE [GENOMIC DNA] OF 1-274</scope>
    <scope>VARIANT PHE-216</scope>
</reference>
<reference key="6">
    <citation type="journal article" date="1991" name="Genomics">
        <title>Cloning and sequence analysis of a human Y-chromosome-derived, testicular cDNA, TSPY.</title>
        <authorList>
            <person name="Arnemann J."/>
            <person name="Jakubiczka S."/>
            <person name="Thuring S."/>
            <person name="Schmidtke J."/>
        </authorList>
    </citation>
    <scope>NUCLEOTIDE SEQUENCE [GENOMIC DNA / MRNA] OF 5-248</scope>
    <source>
        <tissue>Testis</tissue>
    </source>
</reference>
<reference key="7">
    <citation type="journal article" date="1992" name="Hum. Mol. Genet.">
        <title>Molecular isolation and characterization of an expressed gene from the human Y chromosome.</title>
        <authorList>
            <person name="Zhang J.S."/>
            <person name="Yang-Feng T.L."/>
            <person name="Muller U."/>
            <person name="Mohandas T.K."/>
            <person name="de Jong P.J."/>
            <person name="Lau Y.-F.C."/>
        </authorList>
    </citation>
    <scope>NUCLEOTIDE SEQUENCE [GENOMIC DNA] OF 42-308 (ISOFORM 2)</scope>
    <source>
        <tissue>Testis</tissue>
    </source>
</reference>
<reference key="8">
    <citation type="journal article" date="1987" name="Nucleic Acids Res.">
        <title>A human Y-chromosomal DNA sequence expressed in testicular tissue.</title>
        <authorList>
            <person name="Arnemann J."/>
            <person name="Epplen J.T."/>
            <person name="Cooke H.J."/>
            <person name="Sauermann U."/>
            <person name="Engel W."/>
            <person name="Schmidtke J."/>
        </authorList>
    </citation>
    <scope>PRELIMINARY PARTIAL NUCLEOTIDE SEQUENCE [GENOMIC DNA]</scope>
    <source>
        <tissue>Testis</tissue>
    </source>
</reference>
<reference key="9">
    <citation type="journal article" date="2003" name="Gene">
        <title>Expression, alternative splicing and haplotype analysis of transcribed testis specific protein (TSPY) genes.</title>
        <authorList>
            <person name="Krick R."/>
            <person name="Jakubiczka S."/>
            <person name="Arnemann J."/>
        </authorList>
    </citation>
    <scope>ALTERNATIVE SPLICING (ISOFORMS 1 AND 2)</scope>
    <scope>GENE FAMILY ORGANIZATION</scope>
</reference>
<reference key="10">
    <citation type="journal article" date="2000" name="Cytogenet. Cell Genet.">
        <title>TSPY variants in six loci on the human Y chromosome.</title>
        <authorList>
            <person name="Dechend F."/>
            <person name="Williams G."/>
            <person name="Skawran B."/>
            <person name="Schubert S."/>
            <person name="Krawczak M."/>
            <person name="Tyler-Smith C."/>
            <person name="Schmidtke J."/>
        </authorList>
    </citation>
    <scope>VARIANTS VAL-GLU-VAL-VAL-ALA-GLU-79 INS AND ARG-195</scope>
    <scope>GENE FAMILY ORGANIZATION</scope>
</reference>
<reference key="11">
    <citation type="journal article" date="2000" name="Mol. Carcinog.">
        <title>Expression analysis of thirty one Y chromosome genes in human prostate cancer.</title>
        <authorList>
            <person name="Lau Y.-F.C."/>
            <person name="Zhang J."/>
        </authorList>
    </citation>
    <scope>TISSUE SPECIFICITY</scope>
    <scope>INDUCTION</scope>
</reference>
<reference key="12">
    <citation type="journal article" date="1999" name="Am. J. Hum. Genet.">
        <title>Gonadoblastoma, testicular and prostate cancers, and the TSPY gene.</title>
        <authorList>
            <person name="Lau Y.-F.C."/>
        </authorList>
    </citation>
    <scope>REVIEW</scope>
    <scope>DISEASE</scope>
</reference>
<reference key="13">
    <citation type="journal article" date="2000" name="Cytogenet. Cell Genet.">
        <title>Expression of a candidate gene for the gonadoblastoma locus in gonadoblastoma and testicular seminoma.</title>
        <authorList>
            <person name="Lau Y.-F.C."/>
            <person name="Chou P.M."/>
            <person name="Iezzoni J.C."/>
            <person name="Alonzo J.A."/>
            <person name="Koemueves L.G."/>
        </authorList>
    </citation>
    <scope>DISEASE</scope>
</reference>
<proteinExistence type="evidence at protein level"/>
<gene>
    <name type="primary">TSPY1</name>
    <name type="synonym">TSPY</name>
</gene>
<dbReference type="EMBL" id="U58096">
    <property type="protein sequence ID" value="AAB51693.1"/>
    <property type="molecule type" value="mRNA"/>
</dbReference>
<dbReference type="EMBL" id="AF106331">
    <property type="protein sequence ID" value="AAD47421.1"/>
    <property type="molecule type" value="Genomic_DNA"/>
</dbReference>
<dbReference type="EMBL" id="AC006156">
    <property type="status" value="NOT_ANNOTATED_CDS"/>
    <property type="molecule type" value="Genomic_DNA"/>
</dbReference>
<dbReference type="EMBL" id="BC121114">
    <property type="protein sequence ID" value="AAI21115.1"/>
    <property type="molecule type" value="mRNA"/>
</dbReference>
<dbReference type="EMBL" id="X74029">
    <property type="status" value="NOT_ANNOTATED_CDS"/>
    <property type="molecule type" value="Genomic_DNA"/>
</dbReference>
<dbReference type="EMBL" id="M94893">
    <property type="protein sequence ID" value="AAA61238.1"/>
    <property type="status" value="ALT_SEQ"/>
    <property type="molecule type" value="mRNA"/>
</dbReference>
<dbReference type="EMBL" id="M98524">
    <property type="status" value="NOT_ANNOTATED_CDS"/>
    <property type="molecule type" value="Genomic_DNA"/>
</dbReference>
<dbReference type="EMBL" id="M98525">
    <property type="protein sequence ID" value="AAA36570.1"/>
    <property type="status" value="ALT_INIT"/>
    <property type="molecule type" value="mRNA"/>
</dbReference>
<dbReference type="EMBL" id="X06325">
    <property type="protein sequence ID" value="CAA29640.1"/>
    <property type="status" value="ALT_SEQ"/>
    <property type="molecule type" value="Genomic_DNA"/>
</dbReference>
<dbReference type="CCDS" id="CCDS48205.1">
    <molecule id="Q01534-1"/>
</dbReference>
<dbReference type="CCDS" id="CCDS76071.1">
    <molecule id="Q01534-2"/>
</dbReference>
<dbReference type="PIR" id="A27293">
    <property type="entry name" value="A27293"/>
</dbReference>
<dbReference type="PIR" id="A40571">
    <property type="entry name" value="A40571"/>
</dbReference>
<dbReference type="PIR" id="I54327">
    <property type="entry name" value="I54327"/>
</dbReference>
<dbReference type="RefSeq" id="NP_001071165.2">
    <property type="nucleotide sequence ID" value="NM_001077697.2"/>
</dbReference>
<dbReference type="RefSeq" id="NP_001184171.1">
    <molecule id="Q01534-2"/>
    <property type="nucleotide sequence ID" value="NM_001197242.2"/>
</dbReference>
<dbReference type="RefSeq" id="NP_001269398.1">
    <property type="nucleotide sequence ID" value="NM_001282469.2"/>
</dbReference>
<dbReference type="RefSeq" id="NP_003299.2">
    <molecule id="Q01534-1"/>
    <property type="nucleotide sequence ID" value="NM_003308.4"/>
</dbReference>
<dbReference type="SMR" id="Q01534"/>
<dbReference type="BioGRID" id="113109">
    <property type="interactions" value="6"/>
</dbReference>
<dbReference type="BioGRID" id="608573">
    <property type="interactions" value="7"/>
</dbReference>
<dbReference type="BioGRID" id="940742">
    <property type="interactions" value="3"/>
</dbReference>
<dbReference type="CORUM" id="Q01534"/>
<dbReference type="DIP" id="DIP-46607N"/>
<dbReference type="FunCoup" id="Q01534">
    <property type="interactions" value="46"/>
</dbReference>
<dbReference type="IntAct" id="Q01534">
    <property type="interactions" value="4"/>
</dbReference>
<dbReference type="MINT" id="Q01534"/>
<dbReference type="STRING" id="9606.ENSP00000403304"/>
<dbReference type="iPTMnet" id="Q01534"/>
<dbReference type="PhosphoSitePlus" id="Q01534"/>
<dbReference type="BioMuta" id="TSPY1"/>
<dbReference type="DMDM" id="332278243"/>
<dbReference type="jPOST" id="Q01534"/>
<dbReference type="MassIVE" id="Q01534"/>
<dbReference type="PeptideAtlas" id="Q01534"/>
<dbReference type="ProteomicsDB" id="57966">
    <molecule id="Q01534-1"/>
</dbReference>
<dbReference type="ProteomicsDB" id="57967">
    <molecule id="Q01534-2"/>
</dbReference>
<dbReference type="Antibodypedia" id="65589">
    <property type="antibodies" value="163 antibodies from 21 providers"/>
</dbReference>
<dbReference type="DNASU" id="728137"/>
<dbReference type="Ensembl" id="ENST00000423647.6">
    <molecule id="Q01534-2"/>
    <property type="protein sequence ID" value="ENSP00000389324.3"/>
    <property type="gene ID" value="ENSG00000258992.7"/>
</dbReference>
<dbReference type="Ensembl" id="ENST00000451548.6">
    <molecule id="Q01534-1"/>
    <property type="protein sequence ID" value="ENSP00000403304.1"/>
    <property type="gene ID" value="ENSG00000258992.7"/>
</dbReference>
<dbReference type="GeneID" id="100289087"/>
<dbReference type="GeneID" id="7258"/>
<dbReference type="GeneID" id="728137"/>
<dbReference type="KEGG" id="hsa:100289087"/>
<dbReference type="KEGG" id="hsa:7258"/>
<dbReference type="KEGG" id="hsa:728137"/>
<dbReference type="MANE-Select" id="ENST00000451548.6">
    <property type="protein sequence ID" value="ENSP00000403304.1"/>
    <property type="RefSeq nucleotide sequence ID" value="NM_003308.4"/>
    <property type="RefSeq protein sequence ID" value="NP_003299.2"/>
</dbReference>
<dbReference type="UCSC" id="uc004frw.5">
    <molecule id="Q01534-1"/>
    <property type="organism name" value="human"/>
</dbReference>
<dbReference type="AGR" id="HGNC:12381"/>
<dbReference type="AGR" id="HGNC:33876"/>
<dbReference type="AGR" id="HGNC:37473"/>
<dbReference type="CTD" id="100289087"/>
<dbReference type="CTD" id="7258"/>
<dbReference type="CTD" id="728137"/>
<dbReference type="DisGeNET" id="100289087"/>
<dbReference type="DisGeNET" id="7258"/>
<dbReference type="DisGeNET" id="728137"/>
<dbReference type="GeneCards" id="TSPY1"/>
<dbReference type="HGNC" id="HGNC:12381">
    <property type="gene designation" value="TSPY1"/>
</dbReference>
<dbReference type="HPA" id="ENSG00000258992">
    <property type="expression patterns" value="Tissue enriched (testis)"/>
</dbReference>
<dbReference type="MalaCards" id="TSPY1"/>
<dbReference type="MIM" id="480100">
    <property type="type" value="gene"/>
</dbReference>
<dbReference type="neXtProt" id="NX_Q01534"/>
<dbReference type="OpenTargets" id="ENSG00000258992"/>
<dbReference type="Orphanet" id="1646">
    <property type="disease" value="Chromosome Y microdeletion syndrome"/>
</dbReference>
<dbReference type="PharmGKB" id="PA165791579"/>
<dbReference type="VEuPathDB" id="HostDB:ENSG00000258992"/>
<dbReference type="GeneTree" id="ENSGT00940000162417"/>
<dbReference type="InParanoid" id="Q01534"/>
<dbReference type="PAN-GO" id="Q01534">
    <property type="GO annotations" value="4 GO annotations based on evolutionary models"/>
</dbReference>
<dbReference type="TreeFam" id="TF313386"/>
<dbReference type="PathwayCommons" id="Q01534"/>
<dbReference type="SignaLink" id="Q01534"/>
<dbReference type="SIGNOR" id="Q01534"/>
<dbReference type="BioGRID-ORCS" id="100289087">
    <property type="hits" value="3 hits in 123 CRISPR screens"/>
</dbReference>
<dbReference type="BioGRID-ORCS" id="7258">
    <property type="hits" value="19 hits in 634 CRISPR screens"/>
</dbReference>
<dbReference type="BioGRID-ORCS" id="728137">
    <property type="hits" value="13 hits in 207 CRISPR screens"/>
</dbReference>
<dbReference type="Pharos" id="Q01534">
    <property type="development level" value="Tbio"/>
</dbReference>
<dbReference type="PRO" id="PR:Q01534"/>
<dbReference type="Proteomes" id="UP000005640">
    <property type="component" value="Chromosome Y"/>
</dbReference>
<dbReference type="RNAct" id="Q01534">
    <property type="molecule type" value="protein"/>
</dbReference>
<dbReference type="Bgee" id="ENSG00000258992">
    <property type="expression patterns" value="Expressed in male germ line stem cell (sensu Vertebrata) in testis and 3 other cell types or tissues"/>
</dbReference>
<dbReference type="GO" id="GO:0000785">
    <property type="term" value="C:chromatin"/>
    <property type="evidence" value="ECO:0000318"/>
    <property type="project" value="GO_Central"/>
</dbReference>
<dbReference type="GO" id="GO:0005737">
    <property type="term" value="C:cytoplasm"/>
    <property type="evidence" value="ECO:0007669"/>
    <property type="project" value="UniProtKB-SubCell"/>
</dbReference>
<dbReference type="GO" id="GO:0005634">
    <property type="term" value="C:nucleus"/>
    <property type="evidence" value="ECO:0000318"/>
    <property type="project" value="GO_Central"/>
</dbReference>
<dbReference type="GO" id="GO:0003682">
    <property type="term" value="F:chromatin binding"/>
    <property type="evidence" value="ECO:0000318"/>
    <property type="project" value="GO_Central"/>
</dbReference>
<dbReference type="GO" id="GO:0042393">
    <property type="term" value="F:histone binding"/>
    <property type="evidence" value="ECO:0000318"/>
    <property type="project" value="GO_Central"/>
</dbReference>
<dbReference type="GO" id="GO:0030154">
    <property type="term" value="P:cell differentiation"/>
    <property type="evidence" value="ECO:0007669"/>
    <property type="project" value="UniProtKB-KW"/>
</dbReference>
<dbReference type="GO" id="GO:0007506">
    <property type="term" value="P:gonadal mesoderm development"/>
    <property type="evidence" value="ECO:0007669"/>
    <property type="project" value="UniProtKB-KW"/>
</dbReference>
<dbReference type="GO" id="GO:0006334">
    <property type="term" value="P:nucleosome assembly"/>
    <property type="evidence" value="ECO:0007669"/>
    <property type="project" value="InterPro"/>
</dbReference>
<dbReference type="GO" id="GO:0007548">
    <property type="term" value="P:sex differentiation"/>
    <property type="evidence" value="ECO:0000304"/>
    <property type="project" value="ProtInc"/>
</dbReference>
<dbReference type="GO" id="GO:0007283">
    <property type="term" value="P:spermatogenesis"/>
    <property type="evidence" value="ECO:0007669"/>
    <property type="project" value="UniProtKB-KW"/>
</dbReference>
<dbReference type="FunFam" id="1.20.5.1500:FF:000007">
    <property type="entry name" value="Testis-specific Y-encoded protein 10"/>
    <property type="match status" value="1"/>
</dbReference>
<dbReference type="FunFam" id="3.30.1120.90:FF:000002">
    <property type="entry name" value="Testis-specific Y-encoded-like protein 2"/>
    <property type="match status" value="1"/>
</dbReference>
<dbReference type="Gene3D" id="1.20.5.1500">
    <property type="match status" value="1"/>
</dbReference>
<dbReference type="Gene3D" id="3.30.1120.90">
    <property type="entry name" value="Nucleosome assembly protein"/>
    <property type="match status" value="1"/>
</dbReference>
<dbReference type="InterPro" id="IPR037231">
    <property type="entry name" value="NAP-like_sf"/>
</dbReference>
<dbReference type="InterPro" id="IPR002164">
    <property type="entry name" value="NAP_family"/>
</dbReference>
<dbReference type="PANTHER" id="PTHR11875">
    <property type="entry name" value="TESTIS-SPECIFIC Y-ENCODED PROTEIN"/>
    <property type="match status" value="1"/>
</dbReference>
<dbReference type="Pfam" id="PF00956">
    <property type="entry name" value="NAP"/>
    <property type="match status" value="1"/>
</dbReference>
<dbReference type="SUPFAM" id="SSF143113">
    <property type="entry name" value="NAP-like"/>
    <property type="match status" value="1"/>
</dbReference>
<organism>
    <name type="scientific">Homo sapiens</name>
    <name type="common">Human</name>
    <dbReference type="NCBI Taxonomy" id="9606"/>
    <lineage>
        <taxon>Eukaryota</taxon>
        <taxon>Metazoa</taxon>
        <taxon>Chordata</taxon>
        <taxon>Craniata</taxon>
        <taxon>Vertebrata</taxon>
        <taxon>Euteleostomi</taxon>
        <taxon>Mammalia</taxon>
        <taxon>Eutheria</taxon>
        <taxon>Euarchontoglires</taxon>
        <taxon>Primates</taxon>
        <taxon>Haplorrhini</taxon>
        <taxon>Catarrhini</taxon>
        <taxon>Hominidae</taxon>
        <taxon>Homo</taxon>
    </lineage>
</organism>